<comment type="function">
    <text evidence="4 7">Polymerizes chitin, a structural polymer of the cell wall and septum, by transferring the sugar moiety of UDP-GlcNAc to the non-reducing end of the growing chitin polymer (Probable). Contributes to the production of conidia and the ability of fungal conidia to germinate (PubMed:31461507). Involved in fungal stress tolerances (PubMed:31461507).</text>
</comment>
<comment type="catalytic activity">
    <reaction evidence="7">
        <text>[(1-&gt;4)-N-acetyl-beta-D-glucosaminyl](n) + UDP-N-acetyl-alpha-D-glucosamine = [(1-&gt;4)-N-acetyl-beta-D-glucosaminyl](n+1) + UDP + H(+)</text>
        <dbReference type="Rhea" id="RHEA:16637"/>
        <dbReference type="Rhea" id="RHEA-COMP:9593"/>
        <dbReference type="Rhea" id="RHEA-COMP:9595"/>
        <dbReference type="ChEBI" id="CHEBI:15378"/>
        <dbReference type="ChEBI" id="CHEBI:17029"/>
        <dbReference type="ChEBI" id="CHEBI:57705"/>
        <dbReference type="ChEBI" id="CHEBI:58223"/>
        <dbReference type="EC" id="2.4.1.16"/>
    </reaction>
    <physiologicalReaction direction="left-to-right" evidence="7">
        <dbReference type="Rhea" id="RHEA:16638"/>
    </physiologicalReaction>
</comment>
<comment type="subcellular location">
    <subcellularLocation>
        <location evidence="6">Cell membrane</location>
        <topology evidence="1">Multi-pass membrane protein</topology>
    </subcellularLocation>
</comment>
<comment type="tissue specificity">
    <text evidence="4">Expressed in hyphal bodies.</text>
</comment>
<comment type="disruption phenotype">
    <text evidence="4">Leads to increased germination.</text>
</comment>
<comment type="similarity">
    <text evidence="6">Belongs to the chitin synthase family. Class II subfamily.</text>
</comment>
<organism>
    <name type="scientific">Metarhizium acridum (strain CQMa 102)</name>
    <dbReference type="NCBI Taxonomy" id="655827"/>
    <lineage>
        <taxon>Eukaryota</taxon>
        <taxon>Fungi</taxon>
        <taxon>Dikarya</taxon>
        <taxon>Ascomycota</taxon>
        <taxon>Pezizomycotina</taxon>
        <taxon>Sordariomycetes</taxon>
        <taxon>Hypocreomycetidae</taxon>
        <taxon>Hypocreales</taxon>
        <taxon>Clavicipitaceae</taxon>
        <taxon>Metarhizium</taxon>
    </lineage>
</organism>
<proteinExistence type="evidence at transcript level"/>
<gene>
    <name evidence="5" type="primary">ChsII</name>
    <name type="ORF">MAC_08167</name>
</gene>
<name>CHS2_METAQ</name>
<accession>E9EE69</accession>
<protein>
    <recommendedName>
        <fullName evidence="5">Chitin synthase II</fullName>
        <ecNumber evidence="7">2.4.1.16</ecNumber>
    </recommendedName>
    <alternativeName>
        <fullName evidence="6">Chitin-UDP acetyl-glucosaminyl transferase II</fullName>
    </alternativeName>
    <alternativeName>
        <fullName evidence="5">Class-II chitin synthase II</fullName>
    </alternativeName>
</protein>
<sequence>MDRPNTPSRPPEYTLPSYEDEHDTPTGQNPAAVRLLTSFEDPFDHSSKSSPRANLRPRTTRRSYQPSVVSSHSRSASVLDEAPSMPPPDSSYVPFAHRETSSPHRPWTPSSRVSEFSRPPPSNVSYEPSDLNGSPRPGTPSSRYGGSPRRPLPPAPLFSNPGRTSQAFADDATVSIPLDGSDDVFGPETDLSDSRPLPTHRDSFMSGSQETLNEDAEDYVKVEHYGPAPDGAQERRGVRAPQMSKKEVQLINGELVLECKIPTILYSFLPRRNEVEFTHMRYTAVTCDPDDFVERGYNLRQSIGRTTRETELFICITMYNEDEICFTRTMHAVMKNISHFCSRSRSRTWGENGWQKIVVCIISDGREKIHPRTLDALAAMGVYQHGIAKNFVNNRAVQAHVYEYTTQVSLDADLKFKGAEKGIVPCQLIFCLKEKNSRKLNSHRWFFNAFGKALNPNVCILLDVGTRPGSNSLYHLWKAFDTDSNVAGACGEIKAMKGRFGSNLLNPLVASQNFEYKLSNILDKPLESVFGYITVLPGALSAYRYHALQNDETGHGPLSQYFKGETLHGQHADVFTANMYLAEDRILCWELVAKRGERWVLKYVKSCTGETDVPDAVPEFISQRRRWLNGAFFAAVYSLVQFRQILATDHTIARKILLYIEFVYQFVQLLFTYFSLANFYLTFYFVAGGLTDKTVDPFGHNIGSVIFTILRYTCVLLIATQFILSLGNRPQGAKKLYLASMIIYGVIMTYTSFACIYIVVRQLTGKSQDFAIGNNVFTNLIVSMASTIGLYFVMSFLYLEPWHMFTSSLQYFLLLPSYICTLQVYAFCNTHDVTWGTKGDNVIKTDLGGAVGKGETVELEMPSEQLDIDSGYDEALRNLRDRLAVPGSPVSEAQMQEDYYKSVRTYMVVTWMIANGILAMAVSEIYSNKGIGDNFYLRFILWAVASLAIFRALGSTTFAIINVVNIVVEGRIRMNVKVPSWMGGFGSKISEKVSSVGSSLKS</sequence>
<reference key="1">
    <citation type="journal article" date="2011" name="PLoS Genet.">
        <title>Genome sequencing and comparative transcriptomics of the model entomopathogenic fungi Metarhizium anisopliae and M. acridum.</title>
        <authorList>
            <person name="Gao Q."/>
            <person name="Jin K."/>
            <person name="Ying S.-H."/>
            <person name="Zhang Y."/>
            <person name="Xiao G."/>
            <person name="Shang Y."/>
            <person name="Duan Z."/>
            <person name="Hu X."/>
            <person name="Xie X.-Q."/>
            <person name="Zhou G."/>
            <person name="Peng G."/>
            <person name="Luo Z."/>
            <person name="Huang W."/>
            <person name="Wang B."/>
            <person name="Fang W."/>
            <person name="Wang S."/>
            <person name="Zhong Y."/>
            <person name="Ma L.-J."/>
            <person name="St Leger R.J."/>
            <person name="Zhao G.-P."/>
            <person name="Pei Y."/>
            <person name="Feng M.-G."/>
            <person name="Xia Y."/>
            <person name="Wang C."/>
        </authorList>
    </citation>
    <scope>NUCLEOTIDE SEQUENCE [LARGE SCALE GENOMIC DNA]</scope>
    <source>
        <strain>CQMa 102</strain>
    </source>
</reference>
<reference key="2">
    <citation type="journal article" date="2019" name="PLoS Pathog.">
        <title>Members of chitin synthase family in Metarhizium acridum differentially affect fungal growth, stress tolerances, cell wall integrity and virulence.</title>
        <authorList>
            <person name="Zhang J."/>
            <person name="Jiang H."/>
            <person name="Du Y."/>
            <person name="Keyhani N.O."/>
            <person name="Xia Y."/>
            <person name="Jin K."/>
        </authorList>
    </citation>
    <scope>FUNCTION</scope>
    <scope>DISRUPTION PHENOTYPE</scope>
    <scope>TISSUE SPECIFICITY</scope>
</reference>
<feature type="chain" id="PRO_0000460861" description="Chitin synthase II">
    <location>
        <begin position="1"/>
        <end position="1002"/>
    </location>
</feature>
<feature type="transmembrane region" description="Helical" evidence="1">
    <location>
        <begin position="627"/>
        <end position="647"/>
    </location>
</feature>
<feature type="transmembrane region" description="Helical" evidence="1">
    <location>
        <begin position="669"/>
        <end position="689"/>
    </location>
</feature>
<feature type="transmembrane region" description="Helical" evidence="1">
    <location>
        <begin position="704"/>
        <end position="724"/>
    </location>
</feature>
<feature type="transmembrane region" description="Helical" evidence="1">
    <location>
        <begin position="740"/>
        <end position="760"/>
    </location>
</feature>
<feature type="transmembrane region" description="Helical" evidence="1">
    <location>
        <begin position="780"/>
        <end position="800"/>
    </location>
</feature>
<feature type="transmembrane region" description="Helical" evidence="1">
    <location>
        <begin position="808"/>
        <end position="828"/>
    </location>
</feature>
<feature type="transmembrane region" description="Helical" evidence="1">
    <location>
        <begin position="906"/>
        <end position="926"/>
    </location>
</feature>
<feature type="transmembrane region" description="Helical" evidence="1">
    <location>
        <begin position="940"/>
        <end position="960"/>
    </location>
</feature>
<feature type="region of interest" description="Disordered" evidence="3">
    <location>
        <begin position="1"/>
        <end position="165"/>
    </location>
</feature>
<feature type="region of interest" description="Disordered" evidence="3">
    <location>
        <begin position="178"/>
        <end position="209"/>
    </location>
</feature>
<feature type="compositionally biased region" description="Low complexity" evidence="3">
    <location>
        <begin position="63"/>
        <end position="78"/>
    </location>
</feature>
<feature type="glycosylation site" description="N-linked (GlcNAc...) asparagine" evidence="2">
    <location>
        <position position="123"/>
    </location>
</feature>
<feature type="glycosylation site" description="N-linked (GlcNAc...) asparagine" evidence="2">
    <location>
        <position position="336"/>
    </location>
</feature>
<dbReference type="EC" id="2.4.1.16" evidence="7"/>
<dbReference type="EMBL" id="GL698566">
    <property type="protein sequence ID" value="EFY85782.1"/>
    <property type="molecule type" value="Genomic_DNA"/>
</dbReference>
<dbReference type="RefSeq" id="XP_007814507.1">
    <property type="nucleotide sequence ID" value="XM_007816316.1"/>
</dbReference>
<dbReference type="SMR" id="E9EE69"/>
<dbReference type="FunCoup" id="E9EE69">
    <property type="interactions" value="78"/>
</dbReference>
<dbReference type="STRING" id="655827.E9EE69"/>
<dbReference type="GeneID" id="19252478"/>
<dbReference type="KEGG" id="maw:19252478"/>
<dbReference type="eggNOG" id="KOG2571">
    <property type="taxonomic scope" value="Eukaryota"/>
</dbReference>
<dbReference type="HOGENOM" id="CLU_004760_1_1_1"/>
<dbReference type="InParanoid" id="E9EE69"/>
<dbReference type="OMA" id="TTMRETE"/>
<dbReference type="OrthoDB" id="26569at2759"/>
<dbReference type="PHI-base" id="PHI:9488"/>
<dbReference type="Proteomes" id="UP000002499">
    <property type="component" value="Unassembled WGS sequence"/>
</dbReference>
<dbReference type="GO" id="GO:0030428">
    <property type="term" value="C:cell septum"/>
    <property type="evidence" value="ECO:0007669"/>
    <property type="project" value="TreeGrafter"/>
</dbReference>
<dbReference type="GO" id="GO:0005935">
    <property type="term" value="C:cellular bud neck"/>
    <property type="evidence" value="ECO:0007669"/>
    <property type="project" value="EnsemblFungi"/>
</dbReference>
<dbReference type="GO" id="GO:0005886">
    <property type="term" value="C:plasma membrane"/>
    <property type="evidence" value="ECO:0007669"/>
    <property type="project" value="UniProtKB-SubCell"/>
</dbReference>
<dbReference type="GO" id="GO:0004100">
    <property type="term" value="F:chitin synthase activity"/>
    <property type="evidence" value="ECO:0007669"/>
    <property type="project" value="UniProtKB-EC"/>
</dbReference>
<dbReference type="GO" id="GO:0006031">
    <property type="term" value="P:chitin biosynthetic process"/>
    <property type="evidence" value="ECO:0007669"/>
    <property type="project" value="EnsemblFungi"/>
</dbReference>
<dbReference type="GO" id="GO:1902404">
    <property type="term" value="P:mitotic actomyosin contractile ring contraction"/>
    <property type="evidence" value="ECO:0007669"/>
    <property type="project" value="EnsemblFungi"/>
</dbReference>
<dbReference type="CDD" id="cd04190">
    <property type="entry name" value="Chitin_synth_C"/>
    <property type="match status" value="1"/>
</dbReference>
<dbReference type="InterPro" id="IPR004835">
    <property type="entry name" value="Chitin_synth"/>
</dbReference>
<dbReference type="InterPro" id="IPR004834">
    <property type="entry name" value="Chitin_synth_fun"/>
</dbReference>
<dbReference type="InterPro" id="IPR013616">
    <property type="entry name" value="Chitin_synth_N"/>
</dbReference>
<dbReference type="PANTHER" id="PTHR22914">
    <property type="entry name" value="CHITIN SYNTHASE"/>
    <property type="match status" value="1"/>
</dbReference>
<dbReference type="PANTHER" id="PTHR22914:SF38">
    <property type="entry name" value="CHITIN SYNTHASE 2"/>
    <property type="match status" value="1"/>
</dbReference>
<dbReference type="Pfam" id="PF01644">
    <property type="entry name" value="Chitin_synth_1"/>
    <property type="match status" value="1"/>
</dbReference>
<dbReference type="Pfam" id="PF08407">
    <property type="entry name" value="Chitin_synth_1N"/>
    <property type="match status" value="1"/>
</dbReference>
<keyword id="KW-1003">Cell membrane</keyword>
<keyword id="KW-0325">Glycoprotein</keyword>
<keyword id="KW-0328">Glycosyltransferase</keyword>
<keyword id="KW-0472">Membrane</keyword>
<keyword id="KW-1185">Reference proteome</keyword>
<keyword id="KW-0808">Transferase</keyword>
<keyword id="KW-0812">Transmembrane</keyword>
<keyword id="KW-1133">Transmembrane helix</keyword>
<evidence type="ECO:0000255" key="1"/>
<evidence type="ECO:0000255" key="2">
    <source>
        <dbReference type="PROSITE-ProRule" id="PRU00498"/>
    </source>
</evidence>
<evidence type="ECO:0000256" key="3">
    <source>
        <dbReference type="SAM" id="MobiDB-lite"/>
    </source>
</evidence>
<evidence type="ECO:0000269" key="4">
    <source>
    </source>
</evidence>
<evidence type="ECO:0000303" key="5">
    <source>
    </source>
</evidence>
<evidence type="ECO:0000305" key="6"/>
<evidence type="ECO:0000305" key="7">
    <source>
    </source>
</evidence>